<evidence type="ECO:0000250" key="1"/>
<evidence type="ECO:0000250" key="2">
    <source>
        <dbReference type="UniProtKB" id="P02795"/>
    </source>
</evidence>
<evidence type="ECO:0000250" key="3">
    <source>
        <dbReference type="UniProtKB" id="P62339"/>
    </source>
</evidence>
<evidence type="ECO:0000305" key="4"/>
<name>MTB_CARCW</name>
<dbReference type="EMBL" id="AY165048">
    <property type="protein sequence ID" value="AAN85820.1"/>
    <property type="molecule type" value="mRNA"/>
</dbReference>
<dbReference type="GO" id="GO:0046872">
    <property type="term" value="F:metal ion binding"/>
    <property type="evidence" value="ECO:0007669"/>
    <property type="project" value="UniProtKB-KW"/>
</dbReference>
<dbReference type="FunFam" id="4.10.10.10:FF:000001">
    <property type="entry name" value="Metallothionein"/>
    <property type="match status" value="1"/>
</dbReference>
<dbReference type="Gene3D" id="4.10.10.10">
    <property type="entry name" value="Metallothionein Isoform II"/>
    <property type="match status" value="1"/>
</dbReference>
<dbReference type="InterPro" id="IPR017854">
    <property type="entry name" value="Metalthion_dom_sf"/>
</dbReference>
<dbReference type="InterPro" id="IPR023587">
    <property type="entry name" value="Metalthion_dom_sf_vert"/>
</dbReference>
<dbReference type="InterPro" id="IPR000006">
    <property type="entry name" value="Metalthion_vert"/>
</dbReference>
<dbReference type="InterPro" id="IPR018064">
    <property type="entry name" value="Metalthion_vert_metal_BS"/>
</dbReference>
<dbReference type="Pfam" id="PF00131">
    <property type="entry name" value="Metallothio"/>
    <property type="match status" value="1"/>
</dbReference>
<dbReference type="PRINTS" id="PR00860">
    <property type="entry name" value="MTVERTEBRATE"/>
</dbReference>
<dbReference type="SUPFAM" id="SSF57868">
    <property type="entry name" value="Metallothionein"/>
    <property type="match status" value="1"/>
</dbReference>
<dbReference type="PROSITE" id="PS00203">
    <property type="entry name" value="METALLOTHIONEIN_VRT"/>
    <property type="match status" value="1"/>
</dbReference>
<organism>
    <name type="scientific">Carassius cuvieri</name>
    <name type="common">Japanese white crucian carp</name>
    <dbReference type="NCBI Taxonomy" id="52617"/>
    <lineage>
        <taxon>Eukaryota</taxon>
        <taxon>Metazoa</taxon>
        <taxon>Chordata</taxon>
        <taxon>Craniata</taxon>
        <taxon>Vertebrata</taxon>
        <taxon>Euteleostomi</taxon>
        <taxon>Actinopterygii</taxon>
        <taxon>Neopterygii</taxon>
        <taxon>Teleostei</taxon>
        <taxon>Ostariophysi</taxon>
        <taxon>Cypriniformes</taxon>
        <taxon>Cyprinidae</taxon>
        <taxon>Cyprininae</taxon>
        <taxon>Carassius</taxon>
    </lineage>
</organism>
<protein>
    <recommendedName>
        <fullName>Metallothionein B</fullName>
        <shortName>MT-B</shortName>
    </recommendedName>
</protein>
<accession>Q8AWG1</accession>
<comment type="function">
    <text evidence="1">Metallothioneins have a high content of cysteine residues that bind various heavy metals.</text>
</comment>
<comment type="domain">
    <text>Class I metallothioneins contain 2 metal-binding domains: four divalent ions are chelated within cluster A of the alpha domain and are coordinated via cysteinyl thiolate bridges to 11 cysteine ligands. Cluster B, the corresponding region within the beta domain, can ligate three divalent ions to 9 cysteines.</text>
</comment>
<comment type="similarity">
    <text evidence="4">Belongs to the metallothionein superfamily. Type 1 family.</text>
</comment>
<feature type="chain" id="PRO_0000197272" description="Metallothionein B">
    <location>
        <begin position="1"/>
        <end position="60"/>
    </location>
</feature>
<feature type="region of interest" description="Beta">
    <location>
        <begin position="1"/>
        <end position="28"/>
    </location>
</feature>
<feature type="region of interest" description="Alpha">
    <location>
        <begin position="29"/>
        <end position="60"/>
    </location>
</feature>
<feature type="binding site" evidence="2">
    <location>
        <position position="4"/>
    </location>
    <ligand>
        <name>a divalent metal cation</name>
        <dbReference type="ChEBI" id="CHEBI:60240"/>
        <label>1</label>
        <note>in cluster B</note>
    </ligand>
</feature>
<feature type="binding site" evidence="2">
    <location>
        <position position="6"/>
    </location>
    <ligand>
        <name>a divalent metal cation</name>
        <dbReference type="ChEBI" id="CHEBI:60240"/>
        <label>1</label>
        <note>in cluster B</note>
    </ligand>
</feature>
<feature type="binding site" evidence="2">
    <location>
        <position position="6"/>
    </location>
    <ligand>
        <name>a divalent metal cation</name>
        <dbReference type="ChEBI" id="CHEBI:60240"/>
        <label>2</label>
        <note>in cluster B</note>
    </ligand>
</feature>
<feature type="binding site" evidence="2">
    <location>
        <position position="12"/>
    </location>
    <ligand>
        <name>a divalent metal cation</name>
        <dbReference type="ChEBI" id="CHEBI:60240"/>
        <label>2</label>
        <note>in cluster B</note>
    </ligand>
</feature>
<feature type="binding site" evidence="2">
    <location>
        <position position="14"/>
    </location>
    <ligand>
        <name>a divalent metal cation</name>
        <dbReference type="ChEBI" id="CHEBI:60240"/>
        <label>2</label>
        <note>in cluster B</note>
    </ligand>
</feature>
<feature type="binding site" evidence="2">
    <location>
        <position position="14"/>
    </location>
    <ligand>
        <name>a divalent metal cation</name>
        <dbReference type="ChEBI" id="CHEBI:60240"/>
        <label>3</label>
        <note>in cluster B</note>
    </ligand>
</feature>
<feature type="binding site" evidence="2">
    <location>
        <position position="18"/>
    </location>
    <ligand>
        <name>a divalent metal cation</name>
        <dbReference type="ChEBI" id="CHEBI:60240"/>
        <label>3</label>
        <note>in cluster B</note>
    </ligand>
</feature>
<feature type="binding site" evidence="2">
    <location>
        <position position="20"/>
    </location>
    <ligand>
        <name>a divalent metal cation</name>
        <dbReference type="ChEBI" id="CHEBI:60240"/>
        <label>1</label>
        <note>in cluster B</note>
    </ligand>
</feature>
<feature type="binding site" evidence="2">
    <location>
        <position position="23"/>
    </location>
    <ligand>
        <name>a divalent metal cation</name>
        <dbReference type="ChEBI" id="CHEBI:60240"/>
        <label>1</label>
        <note>in cluster B</note>
    </ligand>
</feature>
<feature type="binding site" evidence="2">
    <location>
        <position position="23"/>
    </location>
    <ligand>
        <name>a divalent metal cation</name>
        <dbReference type="ChEBI" id="CHEBI:60240"/>
        <label>3</label>
        <note>in cluster B</note>
    </ligand>
</feature>
<feature type="binding site" evidence="2">
    <location>
        <position position="25"/>
    </location>
    <ligand>
        <name>a divalent metal cation</name>
        <dbReference type="ChEBI" id="CHEBI:60240"/>
        <label>2</label>
        <note>in cluster B</note>
    </ligand>
</feature>
<feature type="binding site" evidence="2">
    <location>
        <position position="28"/>
    </location>
    <ligand>
        <name>a divalent metal cation</name>
        <dbReference type="ChEBI" id="CHEBI:60240"/>
        <label>3</label>
        <note>in cluster B</note>
    </ligand>
</feature>
<feature type="binding site" evidence="2">
    <location>
        <position position="32"/>
    </location>
    <ligand>
        <name>a divalent metal cation</name>
        <dbReference type="ChEBI" id="CHEBI:60240"/>
        <label>4</label>
        <note>in cluster A</note>
    </ligand>
</feature>
<feature type="binding site" evidence="2">
    <location>
        <position position="33"/>
    </location>
    <ligand>
        <name>a divalent metal cation</name>
        <dbReference type="ChEBI" id="CHEBI:60240"/>
        <label>4</label>
        <note>in cluster A</note>
    </ligand>
</feature>
<feature type="binding site" evidence="2">
    <location>
        <position position="33"/>
    </location>
    <ligand>
        <name>a divalent metal cation</name>
        <dbReference type="ChEBI" id="CHEBI:60240"/>
        <label>5</label>
        <note>in cluster A</note>
    </ligand>
</feature>
<feature type="binding site" evidence="2">
    <location>
        <position position="35"/>
    </location>
    <ligand>
        <name>a divalent metal cation</name>
        <dbReference type="ChEBI" id="CHEBI:60240"/>
        <label>5</label>
        <note>in cluster A</note>
    </ligand>
</feature>
<feature type="binding site" evidence="2">
    <location>
        <position position="36"/>
    </location>
    <ligand>
        <name>a divalent metal cation</name>
        <dbReference type="ChEBI" id="CHEBI:60240"/>
        <label>5</label>
        <note>in cluster A</note>
    </ligand>
</feature>
<feature type="binding site" evidence="2">
    <location>
        <position position="36"/>
    </location>
    <ligand>
        <name>a divalent metal cation</name>
        <dbReference type="ChEBI" id="CHEBI:60240"/>
        <label>6</label>
        <note>in cluster A</note>
    </ligand>
</feature>
<feature type="binding site" evidence="2">
    <location>
        <position position="40"/>
    </location>
    <ligand>
        <name>a divalent metal cation</name>
        <dbReference type="ChEBI" id="CHEBI:60240"/>
        <label>6</label>
        <note>in cluster A</note>
    </ligand>
</feature>
<feature type="binding site" evidence="2">
    <location>
        <position position="43"/>
    </location>
    <ligand>
        <name>a divalent metal cation</name>
        <dbReference type="ChEBI" id="CHEBI:60240"/>
        <label>4</label>
        <note>in cluster A</note>
    </ligand>
</feature>
<feature type="binding site" evidence="2">
    <location>
        <position position="43"/>
    </location>
    <ligand>
        <name>a divalent metal cation</name>
        <dbReference type="ChEBI" id="CHEBI:60240"/>
        <label>6</label>
        <note>in cluster A</note>
    </ligand>
</feature>
<feature type="binding site" evidence="2">
    <location>
        <position position="47"/>
    </location>
    <ligand>
        <name>a divalent metal cation</name>
        <dbReference type="ChEBI" id="CHEBI:60240"/>
        <label>4</label>
        <note>in cluster A</note>
    </ligand>
</feature>
<feature type="binding site" evidence="2">
    <location>
        <position position="49"/>
    </location>
    <ligand>
        <name>a divalent metal cation</name>
        <dbReference type="ChEBI" id="CHEBI:60240"/>
        <label>5</label>
        <note>in cluster A</note>
    </ligand>
</feature>
<feature type="binding site" evidence="2">
    <location>
        <position position="49"/>
    </location>
    <ligand>
        <name>a divalent metal cation</name>
        <dbReference type="ChEBI" id="CHEBI:60240"/>
        <label>7</label>
        <note>in cluster A</note>
    </ligand>
</feature>
<feature type="binding site" evidence="3">
    <location>
        <position position="54"/>
    </location>
    <ligand>
        <name>a divalent metal cation</name>
        <dbReference type="ChEBI" id="CHEBI:60240"/>
        <label>7</label>
        <note>in cluster A</note>
    </ligand>
</feature>
<feature type="binding site" evidence="2">
    <location>
        <position position="58"/>
    </location>
    <ligand>
        <name>a divalent metal cation</name>
        <dbReference type="ChEBI" id="CHEBI:60240"/>
        <label>7</label>
        <note>in cluster A</note>
    </ligand>
</feature>
<feature type="binding site" evidence="2">
    <location>
        <position position="59"/>
    </location>
    <ligand>
        <name>a divalent metal cation</name>
        <dbReference type="ChEBI" id="CHEBI:60240"/>
        <label>6</label>
        <note>in cluster A</note>
    </ligand>
</feature>
<feature type="binding site" evidence="2">
    <location>
        <position position="59"/>
    </location>
    <ligand>
        <name>a divalent metal cation</name>
        <dbReference type="ChEBI" id="CHEBI:60240"/>
        <label>7</label>
        <note>in cluster A</note>
    </ligand>
</feature>
<gene>
    <name type="primary">mtb</name>
</gene>
<keyword id="KW-0479">Metal-binding</keyword>
<keyword id="KW-0480">Metal-thiolate cluster</keyword>
<sequence>MDPCDCAKTGACNCGATCKCTNCQCKTCKKSCCPCCPSGCSKCASGCVCKDNSCGSSCCQ</sequence>
<proteinExistence type="inferred from homology"/>
<reference key="1">
    <citation type="journal article" date="2000" name="Biol. Pharm. Bull.">
        <title>Two metallothioneins in the fresh-water fish, crucian carp (Carassius cuvieri): cDNA cloning and assignment of their expression isoforms.</title>
        <authorList>
            <person name="Ren H.W."/>
            <person name="Itoh N."/>
            <person name="Kanekiyo M."/>
            <person name="Tominaga S."/>
            <person name="Kohroki J."/>
            <person name="Hwang G.S."/>
            <person name="Nakanishi T."/>
            <person name="Muto N."/>
            <person name="Tanaka K."/>
        </authorList>
    </citation>
    <scope>NUCLEOTIDE SEQUENCE [MRNA]</scope>
</reference>